<feature type="chain" id="PRO_0000232922" description="ADP-ribosylation factor-like protein 8B">
    <location>
        <begin position="1"/>
        <end position="186"/>
    </location>
</feature>
<feature type="intramembrane region" description="Note=Mediates targeting to membranes" evidence="3">
    <location>
        <begin position="1"/>
        <end position="19"/>
    </location>
</feature>
<feature type="binding site" evidence="3">
    <location>
        <begin position="29"/>
        <end position="35"/>
    </location>
    <ligand>
        <name>GTP</name>
        <dbReference type="ChEBI" id="CHEBI:37565"/>
    </ligand>
</feature>
<feature type="binding site" evidence="1">
    <location>
        <begin position="71"/>
        <end position="75"/>
    </location>
    <ligand>
        <name>GTP</name>
        <dbReference type="ChEBI" id="CHEBI:37565"/>
    </ligand>
</feature>
<feature type="binding site" evidence="3">
    <location>
        <begin position="130"/>
        <end position="133"/>
    </location>
    <ligand>
        <name>GTP</name>
        <dbReference type="ChEBI" id="CHEBI:37565"/>
    </ligand>
</feature>
<feature type="cross-link" description="Glycyl lysine isopeptide (Lys-Gly) (interchain with G-Cter in ubiquitin)" evidence="3">
    <location>
        <position position="141"/>
    </location>
</feature>
<evidence type="ECO:0000250" key="1">
    <source>
        <dbReference type="UniProtKB" id="P62330"/>
    </source>
</evidence>
<evidence type="ECO:0000250" key="2">
    <source>
        <dbReference type="UniProtKB" id="Q9CQW2"/>
    </source>
</evidence>
<evidence type="ECO:0000250" key="3">
    <source>
        <dbReference type="UniProtKB" id="Q9NVJ2"/>
    </source>
</evidence>
<evidence type="ECO:0000305" key="4"/>
<protein>
    <recommendedName>
        <fullName evidence="4">ADP-ribosylation factor-like protein 8B</fullName>
        <ecNumber evidence="3">3.6.5.2</ecNumber>
    </recommendedName>
</protein>
<organism>
    <name type="scientific">Macaca fascicularis</name>
    <name type="common">Crab-eating macaque</name>
    <name type="synonym">Cynomolgus monkey</name>
    <dbReference type="NCBI Taxonomy" id="9541"/>
    <lineage>
        <taxon>Eukaryota</taxon>
        <taxon>Metazoa</taxon>
        <taxon>Chordata</taxon>
        <taxon>Craniata</taxon>
        <taxon>Vertebrata</taxon>
        <taxon>Euteleostomi</taxon>
        <taxon>Mammalia</taxon>
        <taxon>Eutheria</taxon>
        <taxon>Euarchontoglires</taxon>
        <taxon>Primates</taxon>
        <taxon>Haplorrhini</taxon>
        <taxon>Catarrhini</taxon>
        <taxon>Cercopithecidae</taxon>
        <taxon>Cercopithecinae</taxon>
        <taxon>Macaca</taxon>
    </lineage>
</organism>
<proteinExistence type="evidence at transcript level"/>
<reference key="1">
    <citation type="submission" date="2004-03" db="EMBL/GenBank/DDBJ databases">
        <title>DNA sequences of macaque genes expressed in brain or testis and its evolutionary implications.</title>
        <authorList>
            <consortium name="International consortium for macaque cDNA sequencing and analysis"/>
        </authorList>
    </citation>
    <scope>NUCLEOTIDE SEQUENCE [LARGE SCALE MRNA]</scope>
    <source>
        <tissue>Frontal cortex</tissue>
    </source>
</reference>
<keyword id="KW-0131">Cell cycle</keyword>
<keyword id="KW-0132">Cell division</keyword>
<keyword id="KW-0966">Cell projection</keyword>
<keyword id="KW-0159">Chromosome partition</keyword>
<keyword id="KW-0963">Cytoplasm</keyword>
<keyword id="KW-0206">Cytoskeleton</keyword>
<keyword id="KW-0967">Endosome</keyword>
<keyword id="KW-0342">GTP-binding</keyword>
<keyword id="KW-0378">Hydrolase</keyword>
<keyword id="KW-1017">Isopeptide bond</keyword>
<keyword id="KW-0458">Lysosome</keyword>
<keyword id="KW-0472">Membrane</keyword>
<keyword id="KW-0498">Mitosis</keyword>
<keyword id="KW-0547">Nucleotide-binding</keyword>
<keyword id="KW-0653">Protein transport</keyword>
<keyword id="KW-1185">Reference proteome</keyword>
<keyword id="KW-0770">Synapse</keyword>
<keyword id="KW-0813">Transport</keyword>
<keyword id="KW-0832">Ubl conjugation</keyword>
<comment type="function">
    <text evidence="2 3">Small GTPase which cycles between active GTP-bound and inactive GDP-bound states. In its active state, binds to a variety of effector proteins playing a key role in the regulation of lysosomal positioning which is important for nutrient sensing, natural killer cell-mediated cytotoxicity and antigen presentation. Along with its effectors, orchestrates lysosomal transport and fusion. Localizes specifically to lysosomal membranes and mediates anterograde lysosomal motility by recruiting PLEKHM2, which in turn recruits the motor protein kinesin-1 on lysosomes. Required for lysosomal and cytolytic granule exocytosis. Critical factor involved in NK cell-mediated cytotoxicity. Drives the polarization of cytolytic granules and microtubule-organizing centers (MTOCs) toward the immune synapse between effector NK lymphocytes and target cells (By similarity). In neurons, mediates the anterograde axonal long-range transport of presynaptic lysosome-related vesicles required for presynaptic biogenesis and synaptic function (By similarity). Also acts as a regulator of endosome to lysosome trafficking pathways of special significance for host defense (By similarity). Recruits RUFY1 onto early endosomes regulating endosomes to trans-Golgi network proteins retrieval (By similarity). Regulates cargo trafficking to lysosomes by binding to PLEKHM1 and recruiting the HOPS subunit VPS41, resulting in functional assembly of the HOPS complex on lysosomal membranes. Plays an important role in cargo delivery to lysosomes for antigen presentation and microbial killing. Directs the intersection of CD1d with lipid antigens in lysosomes, and plays a role in intersecting phagosomes with lysosomes to generate phagolysosomes that kill microbes (By similarity). Involved in the process of MHC II presentation. Regulates the delivery of antigens to lysosomes and the formation of MHC II-peptide complexes through the recruitment of the HOPS complex to lysosomes allowing the fusion of late endosomes to lysosomes (By similarity). May play a role in chromosome segregation (By similarity).</text>
</comment>
<comment type="catalytic activity">
    <reaction evidence="3">
        <text>GTP + H2O = GDP + phosphate + H(+)</text>
        <dbReference type="Rhea" id="RHEA:19669"/>
        <dbReference type="ChEBI" id="CHEBI:15377"/>
        <dbReference type="ChEBI" id="CHEBI:15378"/>
        <dbReference type="ChEBI" id="CHEBI:37565"/>
        <dbReference type="ChEBI" id="CHEBI:43474"/>
        <dbReference type="ChEBI" id="CHEBI:58189"/>
        <dbReference type="EC" id="3.6.5.2"/>
    </reaction>
    <physiologicalReaction direction="left-to-right" evidence="3">
        <dbReference type="Rhea" id="RHEA:19670"/>
    </physiologicalReaction>
</comment>
<comment type="subunit">
    <text evidence="3">Interacts with tubulin. Interacts with BORCS5; recruits ARL8B to lysosomes. Interacts with VPS41; the interaction mediates the recruitment of the HOPS complex to lysosomes. Interacts (GTP-bound form) with PLEKHM2 (via RUN domain); the interaction is required to recruit the motor protein kinesin-1 on lysosomes. Interacts (GTP-bound form) with PLEKHM1 (via RUN domain); the interaction is required for PLEKHM1 localization to lysosomes and for ARL8B function in delivery and degradation of endocytic and autophagic cargo in lysosomes. PLEKHM1 and PLEKHM2 compete for interaction with ARL8B. Interacts (GTP-bound form) with RUFY1; the interaction is required for RUFY1 endosomal location. When GTP-bound, interacts with RUFY3 and RUFY4, but not with RUFY1, nor RUFY2 (By similarity).</text>
</comment>
<comment type="subcellular location">
    <subcellularLocation>
        <location evidence="3">Late endosome membrane</location>
    </subcellularLocation>
    <subcellularLocation>
        <location evidence="3">Lysosome membrane</location>
    </subcellularLocation>
    <subcellularLocation>
        <location evidence="3">Cytoplasm</location>
        <location evidence="3">Cytoskeleton</location>
        <location evidence="3">Spindle</location>
    </subcellularLocation>
    <subcellularLocation>
        <location evidence="2">Cell projection</location>
        <location evidence="2">Axon</location>
    </subcellularLocation>
    <subcellularLocation>
        <location evidence="2">Synapse</location>
    </subcellularLocation>
    <subcellularLocation>
        <location evidence="3">Cytolytic granule membrane</location>
    </subcellularLocation>
    <subcellularLocation>
        <location evidence="3">Early endosome membrane</location>
    </subcellularLocation>
    <text evidence="2 3">GTP-bound form resides on lysosomal membranes, whereas GDP-bound form is likely associated with microtubular structures. Localizes with microtubules at the spindle mid-zone during mitosis (By similarity). In dendritic cells, localizes to MHC II+ compartments (By similarity).</text>
</comment>
<comment type="PTM">
    <text evidence="3">Ubiquitinated at Lys-141 by RNF167, leading to its degradation.</text>
</comment>
<comment type="similarity">
    <text evidence="4">Belongs to the small GTPase superfamily. Arf family.</text>
</comment>
<name>ARL8B_MACFA</name>
<dbReference type="EC" id="3.6.5.2" evidence="3"/>
<dbReference type="EMBL" id="AB169820">
    <property type="protein sequence ID" value="BAE01901.1"/>
    <property type="molecule type" value="mRNA"/>
</dbReference>
<dbReference type="SMR" id="Q4R4S4"/>
<dbReference type="STRING" id="9541.ENSMFAP00000009671"/>
<dbReference type="eggNOG" id="KOG0075">
    <property type="taxonomic scope" value="Eukaryota"/>
</dbReference>
<dbReference type="Proteomes" id="UP000233100">
    <property type="component" value="Unplaced"/>
</dbReference>
<dbReference type="GO" id="GO:1904115">
    <property type="term" value="C:axon cytoplasm"/>
    <property type="evidence" value="ECO:0007669"/>
    <property type="project" value="GOC"/>
</dbReference>
<dbReference type="GO" id="GO:0101004">
    <property type="term" value="C:cytolytic granule membrane"/>
    <property type="evidence" value="ECO:0007669"/>
    <property type="project" value="UniProtKB-SubCell"/>
</dbReference>
<dbReference type="GO" id="GO:0005829">
    <property type="term" value="C:cytosol"/>
    <property type="evidence" value="ECO:0007669"/>
    <property type="project" value="GOC"/>
</dbReference>
<dbReference type="GO" id="GO:0031901">
    <property type="term" value="C:early endosome membrane"/>
    <property type="evidence" value="ECO:0007669"/>
    <property type="project" value="UniProtKB-SubCell"/>
</dbReference>
<dbReference type="GO" id="GO:0031902">
    <property type="term" value="C:late endosome membrane"/>
    <property type="evidence" value="ECO:0007669"/>
    <property type="project" value="UniProtKB-SubCell"/>
</dbReference>
<dbReference type="GO" id="GO:0005764">
    <property type="term" value="C:lysosome"/>
    <property type="evidence" value="ECO:0000250"/>
    <property type="project" value="UniProtKB"/>
</dbReference>
<dbReference type="GO" id="GO:0005819">
    <property type="term" value="C:spindle"/>
    <property type="evidence" value="ECO:0007669"/>
    <property type="project" value="UniProtKB-SubCell"/>
</dbReference>
<dbReference type="GO" id="GO:0045202">
    <property type="term" value="C:synapse"/>
    <property type="evidence" value="ECO:0007669"/>
    <property type="project" value="UniProtKB-SubCell"/>
</dbReference>
<dbReference type="GO" id="GO:0003925">
    <property type="term" value="F:G protein activity"/>
    <property type="evidence" value="ECO:0007669"/>
    <property type="project" value="UniProtKB-EC"/>
</dbReference>
<dbReference type="GO" id="GO:0005525">
    <property type="term" value="F:GTP binding"/>
    <property type="evidence" value="ECO:0007669"/>
    <property type="project" value="UniProtKB-KW"/>
</dbReference>
<dbReference type="GO" id="GO:0008089">
    <property type="term" value="P:anterograde axonal transport"/>
    <property type="evidence" value="ECO:0007669"/>
    <property type="project" value="TreeGrafter"/>
</dbReference>
<dbReference type="GO" id="GO:0002747">
    <property type="term" value="P:antigen processing and presentation following phagocytosis"/>
    <property type="evidence" value="ECO:0000250"/>
    <property type="project" value="UniProtKB"/>
</dbReference>
<dbReference type="GO" id="GO:0002505">
    <property type="term" value="P:antigen processing and presentation of polysaccharide antigen via MHC class II"/>
    <property type="evidence" value="ECO:0000250"/>
    <property type="project" value="UniProtKB"/>
</dbReference>
<dbReference type="GO" id="GO:0061909">
    <property type="term" value="P:autophagosome-lysosome fusion"/>
    <property type="evidence" value="ECO:0000250"/>
    <property type="project" value="UniProtKB"/>
</dbReference>
<dbReference type="GO" id="GO:1990927">
    <property type="term" value="P:calcium ion regulated lysosome exocytosis"/>
    <property type="evidence" value="ECO:0000250"/>
    <property type="project" value="UniProtKB"/>
</dbReference>
<dbReference type="GO" id="GO:0051301">
    <property type="term" value="P:cell division"/>
    <property type="evidence" value="ECO:0007669"/>
    <property type="project" value="UniProtKB-KW"/>
</dbReference>
<dbReference type="GO" id="GO:0007059">
    <property type="term" value="P:chromosome segregation"/>
    <property type="evidence" value="ECO:0007669"/>
    <property type="project" value="UniProtKB-KW"/>
</dbReference>
<dbReference type="GO" id="GO:0090117">
    <property type="term" value="P:endosome to lysosome transport of low-density lipoprotein particle"/>
    <property type="evidence" value="ECO:0000250"/>
    <property type="project" value="UniProtKB"/>
</dbReference>
<dbReference type="GO" id="GO:1902774">
    <property type="term" value="P:late endosome to lysosome transport"/>
    <property type="evidence" value="ECO:0000250"/>
    <property type="project" value="UniProtKB"/>
</dbReference>
<dbReference type="GO" id="GO:0032418">
    <property type="term" value="P:lysosome localization"/>
    <property type="evidence" value="ECO:0000250"/>
    <property type="project" value="UniProtKB"/>
</dbReference>
<dbReference type="GO" id="GO:0042267">
    <property type="term" value="P:natural killer cell mediated cytotoxicity"/>
    <property type="evidence" value="ECO:0000250"/>
    <property type="project" value="UniProtKB"/>
</dbReference>
<dbReference type="GO" id="GO:0090385">
    <property type="term" value="P:phagosome-lysosome fusion"/>
    <property type="evidence" value="ECO:0000250"/>
    <property type="project" value="UniProtKB"/>
</dbReference>
<dbReference type="GO" id="GO:0001778">
    <property type="term" value="P:plasma membrane repair"/>
    <property type="evidence" value="ECO:0000250"/>
    <property type="project" value="UniProtKB"/>
</dbReference>
<dbReference type="GO" id="GO:0015031">
    <property type="term" value="P:protein transport"/>
    <property type="evidence" value="ECO:0007669"/>
    <property type="project" value="UniProtKB-KW"/>
</dbReference>
<dbReference type="CDD" id="cd04159">
    <property type="entry name" value="Arl10_like"/>
    <property type="match status" value="1"/>
</dbReference>
<dbReference type="FunFam" id="3.40.50.300:FF:000247">
    <property type="entry name" value="ADP-ribosylation factor-like GTPase 8A"/>
    <property type="match status" value="1"/>
</dbReference>
<dbReference type="Gene3D" id="3.40.50.300">
    <property type="entry name" value="P-loop containing nucleotide triphosphate hydrolases"/>
    <property type="match status" value="1"/>
</dbReference>
<dbReference type="InterPro" id="IPR044154">
    <property type="entry name" value="Arl8a/8b"/>
</dbReference>
<dbReference type="InterPro" id="IPR027417">
    <property type="entry name" value="P-loop_NTPase"/>
</dbReference>
<dbReference type="InterPro" id="IPR005225">
    <property type="entry name" value="Small_GTP-bd"/>
</dbReference>
<dbReference type="InterPro" id="IPR006689">
    <property type="entry name" value="Small_GTPase_ARF/SAR"/>
</dbReference>
<dbReference type="NCBIfam" id="TIGR00231">
    <property type="entry name" value="small_GTP"/>
    <property type="match status" value="1"/>
</dbReference>
<dbReference type="PANTHER" id="PTHR45732">
    <property type="entry name" value="ADP-RIBOSYLATION FACTOR-LIKE PROTEIN 8"/>
    <property type="match status" value="1"/>
</dbReference>
<dbReference type="PANTHER" id="PTHR45732:SF13">
    <property type="entry name" value="ADP-RIBOSYLATION FACTOR-LIKE PROTEIN 8B"/>
    <property type="match status" value="1"/>
</dbReference>
<dbReference type="Pfam" id="PF00025">
    <property type="entry name" value="Arf"/>
    <property type="match status" value="1"/>
</dbReference>
<dbReference type="PRINTS" id="PR00328">
    <property type="entry name" value="SAR1GTPBP"/>
</dbReference>
<dbReference type="SMART" id="SM00177">
    <property type="entry name" value="ARF"/>
    <property type="match status" value="1"/>
</dbReference>
<dbReference type="SMART" id="SM00175">
    <property type="entry name" value="RAB"/>
    <property type="match status" value="1"/>
</dbReference>
<dbReference type="SMART" id="SM00178">
    <property type="entry name" value="SAR"/>
    <property type="match status" value="1"/>
</dbReference>
<dbReference type="SUPFAM" id="SSF52540">
    <property type="entry name" value="P-loop containing nucleoside triphosphate hydrolases"/>
    <property type="match status" value="1"/>
</dbReference>
<dbReference type="PROSITE" id="PS51417">
    <property type="entry name" value="ARF"/>
    <property type="match status" value="1"/>
</dbReference>
<gene>
    <name type="primary">ARL8B</name>
    <name type="ORF">QflA-10573</name>
</gene>
<accession>Q4R4S4</accession>
<sequence>MLALISRLLDWFRSLFWKEEMELTLVGLQYSGKTTFVNVIASGQFSEDMIPTVGFNMRKVTKGNVTIKIWDIGGQPRYRSMWERYCRGVNAIVYMIDAADREKIEASRNELHNLLDKPQLQGIPVLVLGNKRDLPNALDEKQLIEKMNLSAIQDREICCYSISCKEKDNIDITLQWLIQYSKSRRS</sequence>